<organism>
    <name type="scientific">Californiconus californicus</name>
    <name type="common">California cone</name>
    <name type="synonym">Conus californicus</name>
    <dbReference type="NCBI Taxonomy" id="1736779"/>
    <lineage>
        <taxon>Eukaryota</taxon>
        <taxon>Metazoa</taxon>
        <taxon>Spiralia</taxon>
        <taxon>Lophotrochozoa</taxon>
        <taxon>Mollusca</taxon>
        <taxon>Gastropoda</taxon>
        <taxon>Caenogastropoda</taxon>
        <taxon>Neogastropoda</taxon>
        <taxon>Conoidea</taxon>
        <taxon>Conidae</taxon>
        <taxon>Californiconus</taxon>
    </lineage>
</organism>
<evidence type="ECO:0000255" key="1"/>
<evidence type="ECO:0000303" key="2">
    <source>
    </source>
</evidence>
<evidence type="ECO:0000305" key="3"/>
<evidence type="ECO:0000305" key="4">
    <source>
    </source>
</evidence>
<reference key="1">
    <citation type="journal article" date="2019" name="Toxins">
        <title>The diversified O-superfamily in Californiconus californicus presents a conotoxin with antimycobacterial activity.</title>
        <authorList>
            <person name="Bernaldez-Sarabia J."/>
            <person name="Figueroa-Montiel A."/>
            <person name="Duenas S."/>
            <person name="Cervantes-Luevano K."/>
            <person name="Beltran J.A."/>
            <person name="Ortiz E."/>
            <person name="Jimenez S."/>
            <person name="Possani L.D."/>
            <person name="Paniagua-Solis J.F."/>
            <person name="Gonzalez-Canudas J."/>
            <person name="Licea-Navarro A."/>
        </authorList>
    </citation>
    <scope>NUCLEOTIDE SEQUENCE [MRNA]</scope>
    <source>
        <tissue>Venom duct</tissue>
    </source>
</reference>
<name>C626_CONCL</name>
<sequence length="64" mass="7030">MKLTCVMIVAVLVLTVCKVVTSDQLKKLRRECYLEPGDSCFHDDGRGACCEGTCLFGINCVASW</sequence>
<feature type="signal peptide" evidence="1">
    <location>
        <begin position="1"/>
        <end position="22"/>
    </location>
</feature>
<feature type="chain" id="PRO_0000450970" description="Conotoxin Cal6.26" evidence="3">
    <location>
        <begin position="23"/>
        <end position="64"/>
    </location>
</feature>
<feature type="disulfide bond" evidence="3">
    <location>
        <begin position="32"/>
        <end position="50"/>
    </location>
</feature>
<feature type="disulfide bond" evidence="3">
    <location>
        <begin position="40"/>
        <end position="54"/>
    </location>
</feature>
<feature type="disulfide bond" evidence="3">
    <location>
        <begin position="49"/>
        <end position="60"/>
    </location>
</feature>
<keyword id="KW-1015">Disulfide bond</keyword>
<keyword id="KW-0960">Knottin</keyword>
<keyword id="KW-0528">Neurotoxin</keyword>
<keyword id="KW-0964">Secreted</keyword>
<keyword id="KW-0732">Signal</keyword>
<keyword id="KW-0800">Toxin</keyword>
<accession>P0DTY8</accession>
<dbReference type="GO" id="GO:0005576">
    <property type="term" value="C:extracellular region"/>
    <property type="evidence" value="ECO:0007669"/>
    <property type="project" value="UniProtKB-SubCell"/>
</dbReference>
<dbReference type="GO" id="GO:0090729">
    <property type="term" value="F:toxin activity"/>
    <property type="evidence" value="ECO:0007669"/>
    <property type="project" value="UniProtKB-KW"/>
</dbReference>
<comment type="function">
    <text evidence="3">Probable neurotoxin.</text>
</comment>
<comment type="subcellular location">
    <subcellularLocation>
        <location evidence="4">Secreted</location>
    </subcellularLocation>
</comment>
<comment type="tissue specificity">
    <text evidence="4">Expressed by the venom duct.</text>
</comment>
<comment type="domain">
    <text evidence="3">The cysteine framework is VI/VII (C-C-CC-C-C).</text>
</comment>
<comment type="domain">
    <text evidence="3">The presence of a 'disulfide through disulfide knot' structurally defines this protein as a knottin.</text>
</comment>
<protein>
    <recommendedName>
        <fullName evidence="3">Conotoxin Cal6.26</fullName>
    </recommendedName>
    <alternativeName>
        <fullName evidence="2">O1_cal6.26</fullName>
    </alternativeName>
</protein>
<proteinExistence type="inferred from homology"/>